<reference key="1">
    <citation type="journal article" date="2003" name="Nat. Biotechnol.">
        <title>The genome sequence of the entomopathogenic bacterium Photorhabdus luminescens.</title>
        <authorList>
            <person name="Duchaud E."/>
            <person name="Rusniok C."/>
            <person name="Frangeul L."/>
            <person name="Buchrieser C."/>
            <person name="Givaudan A."/>
            <person name="Taourit S."/>
            <person name="Bocs S."/>
            <person name="Boursaux-Eude C."/>
            <person name="Chandler M."/>
            <person name="Charles J.-F."/>
            <person name="Dassa E."/>
            <person name="Derose R."/>
            <person name="Derzelle S."/>
            <person name="Freyssinet G."/>
            <person name="Gaudriault S."/>
            <person name="Medigue C."/>
            <person name="Lanois A."/>
            <person name="Powell K."/>
            <person name="Siguier P."/>
            <person name="Vincent R."/>
            <person name="Wingate V."/>
            <person name="Zouine M."/>
            <person name="Glaser P."/>
            <person name="Boemare N."/>
            <person name="Danchin A."/>
            <person name="Kunst F."/>
        </authorList>
    </citation>
    <scope>NUCLEOTIDE SEQUENCE [LARGE SCALE GENOMIC DNA]</scope>
    <source>
        <strain>DSM 15139 / CIP 105565 / TT01</strain>
    </source>
</reference>
<comment type="function">
    <text evidence="1">DEAD-box RNA helicase involved in RNA degradation. Has RNA-dependent ATPase activity and unwinds double-stranded RNA.</text>
</comment>
<comment type="catalytic activity">
    <reaction evidence="1">
        <text>ATP + H2O = ADP + phosphate + H(+)</text>
        <dbReference type="Rhea" id="RHEA:13065"/>
        <dbReference type="ChEBI" id="CHEBI:15377"/>
        <dbReference type="ChEBI" id="CHEBI:15378"/>
        <dbReference type="ChEBI" id="CHEBI:30616"/>
        <dbReference type="ChEBI" id="CHEBI:43474"/>
        <dbReference type="ChEBI" id="CHEBI:456216"/>
        <dbReference type="EC" id="3.6.4.13"/>
    </reaction>
</comment>
<comment type="subunit">
    <text evidence="1">Component of the RNA degradosome, which is a multiprotein complex involved in RNA processing and mRNA degradation.</text>
</comment>
<comment type="subcellular location">
    <subcellularLocation>
        <location evidence="1">Cytoplasm</location>
    </subcellularLocation>
</comment>
<comment type="similarity">
    <text evidence="1">Belongs to the DEAD box helicase family. RhlB subfamily.</text>
</comment>
<proteinExistence type="inferred from homology"/>
<keyword id="KW-0067">ATP-binding</keyword>
<keyword id="KW-0963">Cytoplasm</keyword>
<keyword id="KW-0347">Helicase</keyword>
<keyword id="KW-0378">Hydrolase</keyword>
<keyword id="KW-0547">Nucleotide-binding</keyword>
<keyword id="KW-1185">Reference proteome</keyword>
<keyword id="KW-0694">RNA-binding</keyword>
<organism>
    <name type="scientific">Photorhabdus laumondii subsp. laumondii (strain DSM 15139 / CIP 105565 / TT01)</name>
    <name type="common">Photorhabdus luminescens subsp. laumondii</name>
    <dbReference type="NCBI Taxonomy" id="243265"/>
    <lineage>
        <taxon>Bacteria</taxon>
        <taxon>Pseudomonadati</taxon>
        <taxon>Pseudomonadota</taxon>
        <taxon>Gammaproteobacteria</taxon>
        <taxon>Enterobacterales</taxon>
        <taxon>Morganellaceae</taxon>
        <taxon>Photorhabdus</taxon>
    </lineage>
</organism>
<name>RHLB_PHOLL</name>
<protein>
    <recommendedName>
        <fullName evidence="1">ATP-dependent RNA helicase RhlB</fullName>
        <ecNumber evidence="1">3.6.4.13</ecNumber>
    </recommendedName>
</protein>
<gene>
    <name evidence="1" type="primary">rhlB</name>
    <name type="ordered locus">plu4665</name>
</gene>
<feature type="chain" id="PRO_0000200777" description="ATP-dependent RNA helicase RhlB">
    <location>
        <begin position="1"/>
        <end position="428"/>
    </location>
</feature>
<feature type="domain" description="Helicase ATP-binding" evidence="1">
    <location>
        <begin position="40"/>
        <end position="219"/>
    </location>
</feature>
<feature type="domain" description="Helicase C-terminal" evidence="1">
    <location>
        <begin position="245"/>
        <end position="390"/>
    </location>
</feature>
<feature type="region of interest" description="Disordered" evidence="2">
    <location>
        <begin position="392"/>
        <end position="428"/>
    </location>
</feature>
<feature type="short sequence motif" description="Q motif">
    <location>
        <begin position="9"/>
        <end position="37"/>
    </location>
</feature>
<feature type="short sequence motif" description="DEAD box">
    <location>
        <begin position="165"/>
        <end position="168"/>
    </location>
</feature>
<feature type="compositionally biased region" description="Basic residues" evidence="2">
    <location>
        <begin position="396"/>
        <end position="413"/>
    </location>
</feature>
<feature type="binding site" evidence="1">
    <location>
        <begin position="53"/>
        <end position="60"/>
    </location>
    <ligand>
        <name>ATP</name>
        <dbReference type="ChEBI" id="CHEBI:30616"/>
    </ligand>
</feature>
<accession>Q7MYL2</accession>
<sequence>MSKTHLTEKKFSDFALHPKVIEALDNKGFSNCTPIQALTLPFTVEGRDVAGQAQTGTGKTLAFLASAFHYLLTHPAAEERQTNQPRALIMAPTRELAVQIYSDAEDLAQATGLKMGLAYGGDGYDKQLKILESGVDILIGTTGRLIDYTKQGHINLNAVQVVVLDEADRMYDLGFIKDIRWLFRRMPPVNERMNLLFSATLSYRVRELAFEQMNHAEYIEVEPLQKTGHRIREELFYPSNEEKMRLLQTLLEEEWPDRCIIFANTKHRCEDIWAHLAADGHRVGLLTGDVAQKKRLRILEEFSNGNIDILVATDVAARGLHIPLVTHVFNYDLPDDCEDYVHRIGRTGRAGESGHSISLACEEYALNLPAIEDYIQHSIPVSKYNSQALLKDLPAPKRRYRSRSGNHQRRNNLSHRNNTPRNNRKRSG</sequence>
<dbReference type="EC" id="3.6.4.13" evidence="1"/>
<dbReference type="EMBL" id="BX571874">
    <property type="protein sequence ID" value="CAE17037.1"/>
    <property type="molecule type" value="Genomic_DNA"/>
</dbReference>
<dbReference type="RefSeq" id="WP_011148735.1">
    <property type="nucleotide sequence ID" value="NC_005126.1"/>
</dbReference>
<dbReference type="SMR" id="Q7MYL2"/>
<dbReference type="STRING" id="243265.plu4665"/>
<dbReference type="GeneID" id="48850882"/>
<dbReference type="KEGG" id="plu:plu4665"/>
<dbReference type="eggNOG" id="COG0513">
    <property type="taxonomic scope" value="Bacteria"/>
</dbReference>
<dbReference type="HOGENOM" id="CLU_003041_1_3_6"/>
<dbReference type="OrthoDB" id="9766037at2"/>
<dbReference type="Proteomes" id="UP000002514">
    <property type="component" value="Chromosome"/>
</dbReference>
<dbReference type="GO" id="GO:0005829">
    <property type="term" value="C:cytosol"/>
    <property type="evidence" value="ECO:0007669"/>
    <property type="project" value="TreeGrafter"/>
</dbReference>
<dbReference type="GO" id="GO:0005524">
    <property type="term" value="F:ATP binding"/>
    <property type="evidence" value="ECO:0007669"/>
    <property type="project" value="UniProtKB-UniRule"/>
</dbReference>
<dbReference type="GO" id="GO:0016887">
    <property type="term" value="F:ATP hydrolysis activity"/>
    <property type="evidence" value="ECO:0007669"/>
    <property type="project" value="RHEA"/>
</dbReference>
<dbReference type="GO" id="GO:0003723">
    <property type="term" value="F:RNA binding"/>
    <property type="evidence" value="ECO:0007669"/>
    <property type="project" value="UniProtKB-UniRule"/>
</dbReference>
<dbReference type="GO" id="GO:0003724">
    <property type="term" value="F:RNA helicase activity"/>
    <property type="evidence" value="ECO:0007669"/>
    <property type="project" value="UniProtKB-UniRule"/>
</dbReference>
<dbReference type="GO" id="GO:0006401">
    <property type="term" value="P:RNA catabolic process"/>
    <property type="evidence" value="ECO:0007669"/>
    <property type="project" value="UniProtKB-UniRule"/>
</dbReference>
<dbReference type="CDD" id="cd00268">
    <property type="entry name" value="DEADc"/>
    <property type="match status" value="1"/>
</dbReference>
<dbReference type="CDD" id="cd18787">
    <property type="entry name" value="SF2_C_DEAD"/>
    <property type="match status" value="1"/>
</dbReference>
<dbReference type="FunFam" id="3.40.50.300:FF:000008">
    <property type="entry name" value="ATP-dependent RNA helicase RhlB"/>
    <property type="match status" value="1"/>
</dbReference>
<dbReference type="FunFam" id="3.40.50.300:FF:000312">
    <property type="entry name" value="ATP-dependent RNA helicase RhlB"/>
    <property type="match status" value="1"/>
</dbReference>
<dbReference type="Gene3D" id="3.40.50.300">
    <property type="entry name" value="P-loop containing nucleotide triphosphate hydrolases"/>
    <property type="match status" value="2"/>
</dbReference>
<dbReference type="HAMAP" id="MF_00661">
    <property type="entry name" value="DEAD_helicase_RhlB"/>
    <property type="match status" value="1"/>
</dbReference>
<dbReference type="InterPro" id="IPR011545">
    <property type="entry name" value="DEAD/DEAH_box_helicase_dom"/>
</dbReference>
<dbReference type="InterPro" id="IPR050079">
    <property type="entry name" value="DEAD_box_RNA_helicase"/>
</dbReference>
<dbReference type="InterPro" id="IPR014001">
    <property type="entry name" value="Helicase_ATP-bd"/>
</dbReference>
<dbReference type="InterPro" id="IPR001650">
    <property type="entry name" value="Helicase_C-like"/>
</dbReference>
<dbReference type="InterPro" id="IPR027417">
    <property type="entry name" value="P-loop_NTPase"/>
</dbReference>
<dbReference type="InterPro" id="IPR000629">
    <property type="entry name" value="RNA-helicase_DEAD-box_CS"/>
</dbReference>
<dbReference type="InterPro" id="IPR023554">
    <property type="entry name" value="RNA_helicase_ATP-dep_RhlB"/>
</dbReference>
<dbReference type="InterPro" id="IPR014014">
    <property type="entry name" value="RNA_helicase_DEAD_Q_motif"/>
</dbReference>
<dbReference type="NCBIfam" id="NF003419">
    <property type="entry name" value="PRK04837.1"/>
    <property type="match status" value="1"/>
</dbReference>
<dbReference type="PANTHER" id="PTHR47959:SF10">
    <property type="entry name" value="ATP-DEPENDENT RNA HELICASE RHLB"/>
    <property type="match status" value="1"/>
</dbReference>
<dbReference type="PANTHER" id="PTHR47959">
    <property type="entry name" value="ATP-DEPENDENT RNA HELICASE RHLE-RELATED"/>
    <property type="match status" value="1"/>
</dbReference>
<dbReference type="Pfam" id="PF00270">
    <property type="entry name" value="DEAD"/>
    <property type="match status" value="1"/>
</dbReference>
<dbReference type="Pfam" id="PF00271">
    <property type="entry name" value="Helicase_C"/>
    <property type="match status" value="1"/>
</dbReference>
<dbReference type="SMART" id="SM00487">
    <property type="entry name" value="DEXDc"/>
    <property type="match status" value="1"/>
</dbReference>
<dbReference type="SMART" id="SM00490">
    <property type="entry name" value="HELICc"/>
    <property type="match status" value="1"/>
</dbReference>
<dbReference type="SUPFAM" id="SSF52540">
    <property type="entry name" value="P-loop containing nucleoside triphosphate hydrolases"/>
    <property type="match status" value="1"/>
</dbReference>
<dbReference type="PROSITE" id="PS00039">
    <property type="entry name" value="DEAD_ATP_HELICASE"/>
    <property type="match status" value="1"/>
</dbReference>
<dbReference type="PROSITE" id="PS51192">
    <property type="entry name" value="HELICASE_ATP_BIND_1"/>
    <property type="match status" value="1"/>
</dbReference>
<dbReference type="PROSITE" id="PS51194">
    <property type="entry name" value="HELICASE_CTER"/>
    <property type="match status" value="1"/>
</dbReference>
<dbReference type="PROSITE" id="PS51195">
    <property type="entry name" value="Q_MOTIF"/>
    <property type="match status" value="1"/>
</dbReference>
<evidence type="ECO:0000255" key="1">
    <source>
        <dbReference type="HAMAP-Rule" id="MF_00661"/>
    </source>
</evidence>
<evidence type="ECO:0000256" key="2">
    <source>
        <dbReference type="SAM" id="MobiDB-lite"/>
    </source>
</evidence>